<gene>
    <name evidence="4" type="primary">CFAP44</name>
    <name type="ORF">Tb927.7.3560</name>
</gene>
<dbReference type="EMBL" id="AC159429">
    <property type="protein sequence ID" value="AAX70050.1"/>
    <property type="molecule type" value="Genomic_DNA"/>
</dbReference>
<dbReference type="EMBL" id="CP000070">
    <property type="protein sequence ID" value="AAZ12420.1"/>
    <property type="molecule type" value="Genomic_DNA"/>
</dbReference>
<dbReference type="RefSeq" id="XP_845979.1">
    <property type="nucleotide sequence ID" value="XM_840886.1"/>
</dbReference>
<dbReference type="PDB" id="9E5C">
    <property type="method" value="EM"/>
    <property type="resolution" value="3.20 A"/>
    <property type="chains" value="1t=1-1760"/>
</dbReference>
<dbReference type="PDBsum" id="9E5C"/>
<dbReference type="EMDB" id="EMD-47524"/>
<dbReference type="SMR" id="Q57WH1"/>
<dbReference type="STRING" id="185431.Q57WH1"/>
<dbReference type="PaxDb" id="5691-AAZ12420"/>
<dbReference type="GeneID" id="3658565"/>
<dbReference type="KEGG" id="tbr:Tb927.7.3560"/>
<dbReference type="VEuPathDB" id="TriTrypDB:Tb927.7.3560"/>
<dbReference type="eggNOG" id="KOG2106">
    <property type="taxonomic scope" value="Eukaryota"/>
</dbReference>
<dbReference type="InParanoid" id="Q57WH1"/>
<dbReference type="OMA" id="FIMDRVH"/>
<dbReference type="OrthoDB" id="1935234at2759"/>
<dbReference type="Proteomes" id="UP000008524">
    <property type="component" value="Chromosome 7"/>
</dbReference>
<dbReference type="GO" id="GO:0005930">
    <property type="term" value="C:axoneme"/>
    <property type="evidence" value="ECO:0000314"/>
    <property type="project" value="UniProtKB"/>
</dbReference>
<dbReference type="GO" id="GO:0031514">
    <property type="term" value="C:motile cilium"/>
    <property type="evidence" value="ECO:0007669"/>
    <property type="project" value="UniProtKB-SubCell"/>
</dbReference>
<dbReference type="GO" id="GO:0016607">
    <property type="term" value="C:nuclear speck"/>
    <property type="evidence" value="ECO:0000314"/>
    <property type="project" value="GeneDB"/>
</dbReference>
<dbReference type="GO" id="GO:0035082">
    <property type="term" value="P:axoneme assembly"/>
    <property type="evidence" value="ECO:0000315"/>
    <property type="project" value="UniProtKB"/>
</dbReference>
<dbReference type="GO" id="GO:0060271">
    <property type="term" value="P:cilium assembly"/>
    <property type="evidence" value="ECO:0000318"/>
    <property type="project" value="GO_Central"/>
</dbReference>
<dbReference type="GO" id="GO:0060285">
    <property type="term" value="P:cilium-dependent cell motility"/>
    <property type="evidence" value="ECO:0000315"/>
    <property type="project" value="UniProtKB"/>
</dbReference>
<dbReference type="FunFam" id="2.130.10.10:FF:001607">
    <property type="entry name" value="Cilia- and flagella-associated protein 44"/>
    <property type="match status" value="1"/>
</dbReference>
<dbReference type="Gene3D" id="2.130.10.10">
    <property type="entry name" value="YVTN repeat-like/Quinoprotein amine dehydrogenase"/>
    <property type="match status" value="2"/>
</dbReference>
<dbReference type="InterPro" id="IPR015943">
    <property type="entry name" value="WD40/YVTN_repeat-like_dom_sf"/>
</dbReference>
<dbReference type="InterPro" id="IPR036322">
    <property type="entry name" value="WD40_repeat_dom_sf"/>
</dbReference>
<dbReference type="InterPro" id="IPR001680">
    <property type="entry name" value="WD40_rpt"/>
</dbReference>
<dbReference type="PANTHER" id="PTHR14885">
    <property type="entry name" value="CILIA- AND FLAGELLA-ASSOCIATED PROTEIN 43-RELATED"/>
    <property type="match status" value="1"/>
</dbReference>
<dbReference type="PANTHER" id="PTHR14885:SF3">
    <property type="entry name" value="CILIA- AND FLAGELLA-ASSOCIATED PROTEIN 44"/>
    <property type="match status" value="1"/>
</dbReference>
<dbReference type="Pfam" id="PF00400">
    <property type="entry name" value="WD40"/>
    <property type="match status" value="1"/>
</dbReference>
<dbReference type="SMART" id="SM00320">
    <property type="entry name" value="WD40"/>
    <property type="match status" value="6"/>
</dbReference>
<dbReference type="SUPFAM" id="SSF50978">
    <property type="entry name" value="WD40 repeat-like"/>
    <property type="match status" value="2"/>
</dbReference>
<dbReference type="PROSITE" id="PS50082">
    <property type="entry name" value="WD_REPEATS_2"/>
    <property type="match status" value="1"/>
</dbReference>
<dbReference type="PROSITE" id="PS50294">
    <property type="entry name" value="WD_REPEATS_REGION"/>
    <property type="match status" value="1"/>
</dbReference>
<organism>
    <name type="scientific">Trypanosoma brucei brucei (strain 927/4 GUTat10.1)</name>
    <dbReference type="NCBI Taxonomy" id="185431"/>
    <lineage>
        <taxon>Eukaryota</taxon>
        <taxon>Discoba</taxon>
        <taxon>Euglenozoa</taxon>
        <taxon>Kinetoplastea</taxon>
        <taxon>Metakinetoplastina</taxon>
        <taxon>Trypanosomatida</taxon>
        <taxon>Trypanosomatidae</taxon>
        <taxon>Trypanosoma</taxon>
    </lineage>
</organism>
<proteinExistence type="evidence at protein level"/>
<sequence length="1760" mass="199208">MAAPAQAVVKEKPPIHVYPQAKIGTKIFTHHGIHSMRYNGVCALTGSTVLMASGRFVMFVDVHKGTIESMQGPENGGVGAVAVHPSRQYYVVCERKPSDPAIRAYSWPSRTEVGEFVKGATKGFSACAFNKDGSMMATVGMYPDFFLTVWDWESRGMVLRSKCHNTDVYTVLFSPFDSGLLVSGGAGHIKFWTMANTFTGLKLQGLLGKFGRLEISNVSGFVVLSDGKVISGSESGLIILWEGDLIRCCFAREVDREDDDGTAATFMARSYDYTPCHEGAINVVELMEGGRVLMTAGDDGYFRFWRVSELEVAEGEGAPPLYVPECLGEILVHAGAFIRSVTYCKDVDEWVVLDSAGVLWRVPYVHPDDILNNAVTKPKEQAVPALEFNGGSITSAALSPIDHTVVTGGEDGTIRLVDYVTPRELYKMCLPQPNVVIGLRFFQKDPEKKKFLACCKSGAVLLVKRGSTAFTLLGQWRPHNDGLALFAVDAAEHRLCTIAHGTVFFFTILDDFSSLEPIGFCKIPLPGATCVAWDDASSCCLIGFECGKLLAIRAPTRDMVDQSVSYEFTCNYALVGIRQRKKVEKKQANVSAGEREGFVEEEEEEEYLGPWPVRLICPMADGDFAIGAGGVELLYKYGLHVRYEGQKELPPLPPTGIEPPDYVEEPLMNLCYRDYTPEASSMSYSGRYLVVICEGSQMLLRQLDEMGRVRLEPILVASAHDRLDGPIAAACTSFDDKMLVSVGSDGLVVAQLLDGCIAPQPPSPVAQLQPLRAEEIVEPQLAPFSITEQKDLDDRRRAEDEKRRELNLFLDKLKDVHQKYARLLRENQSLALTHRLSKEEITIHPQIYRELQEEMRQRVEESRKPTALELARENIRTRKMRNRFVDNLAHDRFLVRSFSKEFSVASFRTPYVDGSIKLFQQQIDELLGSERCSSLACDGDRGIVSVASGEASQQSPRNLSLSTAAGVVRWLNSEERKRNEGEQQKMNAAHREAEILTTTMRQYLNKMDERREERHWRKKGYEMLLAHKPDPAVEEASLNEELRRETRRRGECILRTDPSYHSAPSAVIKLQQLIRLEEIIFNMRNNFSNELLKLRDEKERLCGTLNVSLQRIRAINEKLKDKSFHADDVKLTPEEMPGKRFEISRDGLVAFMKQRQEEKLREQTAKKAQRGFGADLATGEPATNTDTSGADTPATRRSEGEDSRKVTISANRDSFGTAAARTRSVRTGTLAASKGGRPFSGGGFAAGAARERMNHELRVKHENIKLTEMEEEELQIERNRLLAERQRLHTQVQAMMDEFDVRLWSMYEERSRVDANLCLAHTHSLLLFREYNILLVFRQKDFELQSSYDEARNSRDRCLREMEELQRLVQDQTASIEKLQEANKVFRREVEIFISNSFPAEHVPYITKVFLRQIKRRKHHSDMSGNDDDITSDDDDDDDMGEDEAWEEICPPNCSEERWCEVIEKREVRLDYVDAITEERRQLEATEQRIEEHKALADKNNAAVSTCLKAIEDFQGEKRKQLNMLETLVAMRCGQVRCLDEEGRCPDTFRRNDLVVVSDKVITGLHDRIRALAEEKHDRRGKLKSMVAEQQALQRERSEKQALHTQWEEKIYEAMLLKFGQIVNLEVLESSCGSREVEQLKERLRLEELSWEKELRKRDKKIAVLREKLHESLEYNTSLLQTIGDQESDRQSVERSLAQSTQKVVSKMYDSINVATEEDRSNLRLLIAAQQEEIDALRTEVALLRTKGGHVYAAAMAAGR</sequence>
<comment type="function">
    <text evidence="3">Flagellar protein involved in flagellum axoneme organization and function.</text>
</comment>
<comment type="subcellular location">
    <subcellularLocation>
        <location evidence="3">Cell projection</location>
        <location evidence="3">Cilium</location>
        <location evidence="3">Flagellum</location>
    </subcellularLocation>
    <subcellularLocation>
        <location evidence="3">Cytoplasm</location>
        <location evidence="3">Cytoskeleton</location>
        <location evidence="3">Flagellum axoneme</location>
    </subcellularLocation>
    <text evidence="3">Closely associated to the axoneme along the paraflagellar rod.</text>
</comment>
<comment type="similarity">
    <text evidence="5">Belongs to the CFAP44 family.</text>
</comment>
<name>CFA44_TRYB2</name>
<keyword id="KW-0002">3D-structure</keyword>
<keyword id="KW-0966">Cell projection</keyword>
<keyword id="KW-0969">Cilium</keyword>
<keyword id="KW-0175">Coiled coil</keyword>
<keyword id="KW-0963">Cytoplasm</keyword>
<keyword id="KW-0206">Cytoskeleton</keyword>
<keyword id="KW-0282">Flagellum</keyword>
<keyword id="KW-1185">Reference proteome</keyword>
<keyword id="KW-0677">Repeat</keyword>
<keyword id="KW-0853">WD repeat</keyword>
<reference key="1">
    <citation type="journal article" date="2005" name="Science">
        <title>The genome of the African trypanosome Trypanosoma brucei.</title>
        <authorList>
            <person name="Berriman M."/>
            <person name="Ghedin E."/>
            <person name="Hertz-Fowler C."/>
            <person name="Blandin G."/>
            <person name="Renauld H."/>
            <person name="Bartholomeu D.C."/>
            <person name="Lennard N.J."/>
            <person name="Caler E."/>
            <person name="Hamlin N.E."/>
            <person name="Haas B."/>
            <person name="Bohme U."/>
            <person name="Hannick L."/>
            <person name="Aslett M.A."/>
            <person name="Shallom J."/>
            <person name="Marcello L."/>
            <person name="Hou L."/>
            <person name="Wickstead B."/>
            <person name="Alsmark U.C.M."/>
            <person name="Arrowsmith C."/>
            <person name="Atkin R.J."/>
            <person name="Barron A.J."/>
            <person name="Bringaud F."/>
            <person name="Brooks K."/>
            <person name="Carrington M."/>
            <person name="Cherevach I."/>
            <person name="Chillingworth T.J."/>
            <person name="Churcher C."/>
            <person name="Clark L.N."/>
            <person name="Corton C.H."/>
            <person name="Cronin A."/>
            <person name="Davies R.M."/>
            <person name="Doggett J."/>
            <person name="Djikeng A."/>
            <person name="Feldblyum T."/>
            <person name="Field M.C."/>
            <person name="Fraser A."/>
            <person name="Goodhead I."/>
            <person name="Hance Z."/>
            <person name="Harper D."/>
            <person name="Harris B.R."/>
            <person name="Hauser H."/>
            <person name="Hostetler J."/>
            <person name="Ivens A."/>
            <person name="Jagels K."/>
            <person name="Johnson D."/>
            <person name="Johnson J."/>
            <person name="Jones K."/>
            <person name="Kerhornou A.X."/>
            <person name="Koo H."/>
            <person name="Larke N."/>
            <person name="Landfear S."/>
            <person name="Larkin C."/>
            <person name="Leech V."/>
            <person name="Line A."/>
            <person name="Lord A."/>
            <person name="Macleod A."/>
            <person name="Mooney P.J."/>
            <person name="Moule S."/>
            <person name="Martin D.M."/>
            <person name="Morgan G.W."/>
            <person name="Mungall K."/>
            <person name="Norbertczak H."/>
            <person name="Ormond D."/>
            <person name="Pai G."/>
            <person name="Peacock C.S."/>
            <person name="Peterson J."/>
            <person name="Quail M.A."/>
            <person name="Rabbinowitsch E."/>
            <person name="Rajandream M.A."/>
            <person name="Reitter C."/>
            <person name="Salzberg S.L."/>
            <person name="Sanders M."/>
            <person name="Schobel S."/>
            <person name="Sharp S."/>
            <person name="Simmonds M."/>
            <person name="Simpson A.J."/>
            <person name="Tallon L."/>
            <person name="Turner C.M."/>
            <person name="Tait A."/>
            <person name="Tivey A.R."/>
            <person name="Van Aken S."/>
            <person name="Walker D."/>
            <person name="Wanless D."/>
            <person name="Wang S."/>
            <person name="White B."/>
            <person name="White O."/>
            <person name="Whitehead S."/>
            <person name="Woodward J."/>
            <person name="Wortman J."/>
            <person name="Adams M.D."/>
            <person name="Embley T.M."/>
            <person name="Gull K."/>
            <person name="Ullu E."/>
            <person name="Barry J.D."/>
            <person name="Fairlamb A.H."/>
            <person name="Opperdoes F."/>
            <person name="Barrell B.G."/>
            <person name="Donelson J.E."/>
            <person name="Hall N."/>
            <person name="Fraser C.M."/>
            <person name="Melville S.E."/>
            <person name="El-Sayed N.M.A."/>
        </authorList>
    </citation>
    <scope>NUCLEOTIDE SEQUENCE [LARGE SCALE GENOMIC DNA]</scope>
    <source>
        <strain>927/4 GUTat10.1</strain>
    </source>
</reference>
<reference key="2">
    <citation type="journal article" date="2018" name="Nat. Commun.">
        <title>Mutations in CFAP43 and CFAP44 cause male infertility and flagellum defects in Trypanosoma and human.</title>
        <authorList>
            <person name="Coutton C."/>
            <person name="Vargas A.S."/>
            <person name="Amiri-Yekta A."/>
            <person name="Kherraf Z.E."/>
            <person name="Ben Mustapha S.F."/>
            <person name="Le Tanno P."/>
            <person name="Wambergue-Legrand C."/>
            <person name="Karaouzene T."/>
            <person name="Martinez G."/>
            <person name="Crouzy S."/>
            <person name="Daneshipour A."/>
            <person name="Hosseini S.H."/>
            <person name="Mitchell V."/>
            <person name="Halouani L."/>
            <person name="Marrakchi O."/>
            <person name="Makni M."/>
            <person name="Latrous H."/>
            <person name="Kharouf M."/>
            <person name="Deleuze J.F."/>
            <person name="Boland A."/>
            <person name="Hennebicq S."/>
            <person name="Satre V."/>
            <person name="Jouk P.S."/>
            <person name="Thierry-Mieg N."/>
            <person name="Conne B."/>
            <person name="Dacheux D."/>
            <person name="Landrein N."/>
            <person name="Schmitt A."/>
            <person name="Stouvenel L."/>
            <person name="Lores P."/>
            <person name="El Khouri E."/>
            <person name="Bottari S.P."/>
            <person name="Faure J."/>
            <person name="Wolf J.P."/>
            <person name="Pernet-Gallay K."/>
            <person name="Escoffier J."/>
            <person name="Gourabi H."/>
            <person name="Robinson D.R."/>
            <person name="Nef S."/>
            <person name="Dulioust E."/>
            <person name="Zouari R."/>
            <person name="Bonhivers M."/>
            <person name="Toure A."/>
            <person name="Arnoult C."/>
            <person name="Ray P.F."/>
        </authorList>
    </citation>
    <scope>SUBCELLULAR LOCATION</scope>
    <scope>FUNCTION</scope>
</reference>
<evidence type="ECO:0000255" key="1"/>
<evidence type="ECO:0000256" key="2">
    <source>
        <dbReference type="SAM" id="MobiDB-lite"/>
    </source>
</evidence>
<evidence type="ECO:0000269" key="3">
    <source>
    </source>
</evidence>
<evidence type="ECO:0000303" key="4">
    <source>
    </source>
</evidence>
<evidence type="ECO:0000305" key="5"/>
<protein>
    <recommendedName>
        <fullName evidence="4">Cilia- and flagella-associated protein 44</fullName>
    </recommendedName>
    <alternativeName>
        <fullName>Component of motile flagella 7</fullName>
    </alternativeName>
</protein>
<accession>Q57WH1</accession>
<accession>D6XIN7</accession>
<feature type="chain" id="PRO_0000445515" description="Cilia- and flagella-associated protein 44">
    <location>
        <begin position="1"/>
        <end position="1760"/>
    </location>
</feature>
<feature type="repeat" description="WD 1" evidence="1">
    <location>
        <begin position="119"/>
        <end position="160"/>
    </location>
</feature>
<feature type="repeat" description="WD 2" evidence="1">
    <location>
        <begin position="163"/>
        <end position="202"/>
    </location>
</feature>
<feature type="repeat" description="WD 3" evidence="1">
    <location>
        <begin position="213"/>
        <end position="251"/>
    </location>
</feature>
<feature type="repeat" description="WD 4" evidence="1">
    <location>
        <begin position="276"/>
        <end position="315"/>
    </location>
</feature>
<feature type="repeat" description="WD 5" evidence="1">
    <location>
        <begin position="388"/>
        <end position="427"/>
    </location>
</feature>
<feature type="region of interest" description="Disordered" evidence="2">
    <location>
        <begin position="1155"/>
        <end position="1224"/>
    </location>
</feature>
<feature type="region of interest" description="Disordered" evidence="2">
    <location>
        <begin position="1420"/>
        <end position="1444"/>
    </location>
</feature>
<feature type="coiled-coil region" evidence="1">
    <location>
        <begin position="1348"/>
        <end position="1389"/>
    </location>
</feature>
<feature type="compositionally biased region" description="Basic and acidic residues" evidence="2">
    <location>
        <begin position="1155"/>
        <end position="1165"/>
    </location>
</feature>
<feature type="compositionally biased region" description="Polar residues" evidence="2">
    <location>
        <begin position="1181"/>
        <end position="1190"/>
    </location>
</feature>
<feature type="compositionally biased region" description="Basic and acidic residues" evidence="2">
    <location>
        <begin position="1194"/>
        <end position="1205"/>
    </location>
</feature>
<feature type="compositionally biased region" description="Acidic residues" evidence="2">
    <location>
        <begin position="1425"/>
        <end position="1444"/>
    </location>
</feature>